<evidence type="ECO:0000255" key="1">
    <source>
        <dbReference type="HAMAP-Rule" id="MF_01808"/>
    </source>
</evidence>
<evidence type="ECO:0000255" key="2">
    <source>
        <dbReference type="PROSITE-ProRule" id="PRU01246"/>
    </source>
</evidence>
<evidence type="ECO:0000255" key="3">
    <source>
        <dbReference type="PROSITE-ProRule" id="PRU01248"/>
    </source>
</evidence>
<keyword id="KW-0131">Cell cycle</keyword>
<keyword id="KW-0132">Cell division</keyword>
<keyword id="KW-0159">Chromosome partition</keyword>
<keyword id="KW-0963">Cytoplasm</keyword>
<keyword id="KW-0229">DNA integration</keyword>
<keyword id="KW-0233">DNA recombination</keyword>
<keyword id="KW-0238">DNA-binding</keyword>
<reference key="1">
    <citation type="journal article" date="2007" name="Genome Res.">
        <title>Lateral gene transfer between obligate intracellular bacteria: evidence from the Rickettsia massiliae genome.</title>
        <authorList>
            <person name="Blanc G."/>
            <person name="Ogata H."/>
            <person name="Robert C."/>
            <person name="Audic S."/>
            <person name="Claverie J.-M."/>
            <person name="Raoult D."/>
        </authorList>
    </citation>
    <scope>NUCLEOTIDE SEQUENCE [LARGE SCALE GENOMIC DNA]</scope>
    <source>
        <strain>Mtu5</strain>
    </source>
</reference>
<proteinExistence type="inferred from homology"/>
<protein>
    <recommendedName>
        <fullName evidence="1">Tyrosine recombinase XerC</fullName>
    </recommendedName>
</protein>
<name>XERC_RICM5</name>
<sequence length="305" mass="35468">MLDTSIQALINKWQKYLVLQRNYSNHTVISYNNDLKHFLEFMNYYNSEFVTINHIKTADIRLIRSWLAKRHCDNFTTSSISRGLSAVKNFYRFLEKTTQLNSHIIFSIKSPKKTKLLPKALSEDDVVISLEHIEEYGNVKWVELRNKALLVLIYASGLRISEALSITKLHLQNLEFIRIIGKGSKERIIPWLPIAKNLITQYLEILPYKLGDNEPIFRGKQGKKLQPPVFNRELIKLKHFYGLPQHLTAHSFRHSFASHLLEHGADLRSIQELLGHKSLSTTQNYTKTSIKHLEAVYTTAYPIKK</sequence>
<accession>A8F2V6</accession>
<comment type="function">
    <text evidence="1">Site-specific tyrosine recombinase, which acts by catalyzing the cutting and rejoining of the recombining DNA molecules. The XerC-XerD complex is essential to convert dimers of the bacterial chromosome into monomers to permit their segregation at cell division. It also contributes to the segregational stability of plasmids.</text>
</comment>
<comment type="subunit">
    <text evidence="1">Forms a cyclic heterotetrameric complex composed of two molecules of XerC and two molecules of XerD.</text>
</comment>
<comment type="subcellular location">
    <subcellularLocation>
        <location evidence="1">Cytoplasm</location>
    </subcellularLocation>
</comment>
<comment type="similarity">
    <text evidence="1">Belongs to the 'phage' integrase family. XerC subfamily.</text>
</comment>
<feature type="chain" id="PRO_1000070035" description="Tyrosine recombinase XerC">
    <location>
        <begin position="1"/>
        <end position="305"/>
    </location>
</feature>
<feature type="domain" description="Core-binding (CB)" evidence="3">
    <location>
        <begin position="4"/>
        <end position="95"/>
    </location>
</feature>
<feature type="domain" description="Tyr recombinase" evidence="2">
    <location>
        <begin position="116"/>
        <end position="298"/>
    </location>
</feature>
<feature type="active site" evidence="1">
    <location>
        <position position="159"/>
    </location>
</feature>
<feature type="active site" evidence="1">
    <location>
        <position position="182"/>
    </location>
</feature>
<feature type="active site" evidence="1">
    <location>
        <position position="250"/>
    </location>
</feature>
<feature type="active site" evidence="1">
    <location>
        <position position="253"/>
    </location>
</feature>
<feature type="active site" evidence="1">
    <location>
        <position position="276"/>
    </location>
</feature>
<feature type="active site" description="O-(3'-phospho-DNA)-tyrosine intermediate" evidence="1">
    <location>
        <position position="285"/>
    </location>
</feature>
<organism>
    <name type="scientific">Rickettsia massiliae (strain Mtu5)</name>
    <dbReference type="NCBI Taxonomy" id="416276"/>
    <lineage>
        <taxon>Bacteria</taxon>
        <taxon>Pseudomonadati</taxon>
        <taxon>Pseudomonadota</taxon>
        <taxon>Alphaproteobacteria</taxon>
        <taxon>Rickettsiales</taxon>
        <taxon>Rickettsiaceae</taxon>
        <taxon>Rickettsieae</taxon>
        <taxon>Rickettsia</taxon>
        <taxon>spotted fever group</taxon>
    </lineage>
</organism>
<gene>
    <name evidence="1" type="primary">xerC</name>
    <name type="ordered locus">RMA_1286</name>
</gene>
<dbReference type="EMBL" id="CP000683">
    <property type="protein sequence ID" value="ABV85242.1"/>
    <property type="molecule type" value="Genomic_DNA"/>
</dbReference>
<dbReference type="RefSeq" id="WP_012153203.1">
    <property type="nucleotide sequence ID" value="NC_009900.1"/>
</dbReference>
<dbReference type="SMR" id="A8F2V6"/>
<dbReference type="KEGG" id="rms:RMA_1286"/>
<dbReference type="HOGENOM" id="CLU_027562_9_0_5"/>
<dbReference type="Proteomes" id="UP000001311">
    <property type="component" value="Chromosome"/>
</dbReference>
<dbReference type="GO" id="GO:0005737">
    <property type="term" value="C:cytoplasm"/>
    <property type="evidence" value="ECO:0007669"/>
    <property type="project" value="UniProtKB-SubCell"/>
</dbReference>
<dbReference type="GO" id="GO:0003677">
    <property type="term" value="F:DNA binding"/>
    <property type="evidence" value="ECO:0007669"/>
    <property type="project" value="UniProtKB-KW"/>
</dbReference>
<dbReference type="GO" id="GO:0009037">
    <property type="term" value="F:tyrosine-based site-specific recombinase activity"/>
    <property type="evidence" value="ECO:0007669"/>
    <property type="project" value="UniProtKB-UniRule"/>
</dbReference>
<dbReference type="GO" id="GO:0051301">
    <property type="term" value="P:cell division"/>
    <property type="evidence" value="ECO:0007669"/>
    <property type="project" value="UniProtKB-KW"/>
</dbReference>
<dbReference type="GO" id="GO:0007059">
    <property type="term" value="P:chromosome segregation"/>
    <property type="evidence" value="ECO:0007669"/>
    <property type="project" value="UniProtKB-UniRule"/>
</dbReference>
<dbReference type="GO" id="GO:0006313">
    <property type="term" value="P:DNA transposition"/>
    <property type="evidence" value="ECO:0007669"/>
    <property type="project" value="UniProtKB-UniRule"/>
</dbReference>
<dbReference type="CDD" id="cd00798">
    <property type="entry name" value="INT_XerDC_C"/>
    <property type="match status" value="1"/>
</dbReference>
<dbReference type="Gene3D" id="1.10.150.130">
    <property type="match status" value="1"/>
</dbReference>
<dbReference type="Gene3D" id="1.10.443.10">
    <property type="entry name" value="Intergrase catalytic core"/>
    <property type="match status" value="1"/>
</dbReference>
<dbReference type="HAMAP" id="MF_01808">
    <property type="entry name" value="Recomb_XerC_XerD"/>
    <property type="match status" value="1"/>
</dbReference>
<dbReference type="InterPro" id="IPR044068">
    <property type="entry name" value="CB"/>
</dbReference>
<dbReference type="InterPro" id="IPR011010">
    <property type="entry name" value="DNA_brk_join_enz"/>
</dbReference>
<dbReference type="InterPro" id="IPR013762">
    <property type="entry name" value="Integrase-like_cat_sf"/>
</dbReference>
<dbReference type="InterPro" id="IPR002104">
    <property type="entry name" value="Integrase_catalytic"/>
</dbReference>
<dbReference type="InterPro" id="IPR010998">
    <property type="entry name" value="Integrase_recombinase_N"/>
</dbReference>
<dbReference type="InterPro" id="IPR004107">
    <property type="entry name" value="Integrase_SAM-like_N"/>
</dbReference>
<dbReference type="InterPro" id="IPR023009">
    <property type="entry name" value="Tyrosine_recombinase_XerC/XerD"/>
</dbReference>
<dbReference type="InterPro" id="IPR050090">
    <property type="entry name" value="Tyrosine_recombinase_XerCD"/>
</dbReference>
<dbReference type="PANTHER" id="PTHR30349">
    <property type="entry name" value="PHAGE INTEGRASE-RELATED"/>
    <property type="match status" value="1"/>
</dbReference>
<dbReference type="PANTHER" id="PTHR30349:SF90">
    <property type="entry name" value="TYROSINE RECOMBINASE XERD"/>
    <property type="match status" value="1"/>
</dbReference>
<dbReference type="Pfam" id="PF02899">
    <property type="entry name" value="Phage_int_SAM_1"/>
    <property type="match status" value="1"/>
</dbReference>
<dbReference type="Pfam" id="PF00589">
    <property type="entry name" value="Phage_integrase"/>
    <property type="match status" value="1"/>
</dbReference>
<dbReference type="SUPFAM" id="SSF56349">
    <property type="entry name" value="DNA breaking-rejoining enzymes"/>
    <property type="match status" value="1"/>
</dbReference>
<dbReference type="PROSITE" id="PS51900">
    <property type="entry name" value="CB"/>
    <property type="match status" value="1"/>
</dbReference>
<dbReference type="PROSITE" id="PS51898">
    <property type="entry name" value="TYR_RECOMBINASE"/>
    <property type="match status" value="1"/>
</dbReference>